<feature type="chain" id="PRO_0000217600" description="Photosystem I assembly protein Ycf4">
    <location>
        <begin position="1"/>
        <end position="184"/>
    </location>
</feature>
<feature type="transmembrane region" description="Helical" evidence="1">
    <location>
        <begin position="21"/>
        <end position="43"/>
    </location>
</feature>
<feature type="transmembrane region" description="Helical" evidence="1">
    <location>
        <begin position="63"/>
        <end position="85"/>
    </location>
</feature>
<reference key="1">
    <citation type="journal article" date="2002" name="Proc. Natl. Acad. Sci. U.S.A.">
        <title>The chloroplast and mitochondrial genome sequences of the charophyte Chaetosphaeridium globosum: insights into the timing of the events that restructured organelle DNAs within the green algal lineage that led to land plants.</title>
        <authorList>
            <person name="Turmel M."/>
            <person name="Otis C."/>
            <person name="Lemieux C."/>
        </authorList>
    </citation>
    <scope>NUCLEOTIDE SEQUENCE [LARGE SCALE GENOMIC DNA]</scope>
    <source>
        <strain>M1311</strain>
    </source>
</reference>
<keyword id="KW-0150">Chloroplast</keyword>
<keyword id="KW-0472">Membrane</keyword>
<keyword id="KW-0602">Photosynthesis</keyword>
<keyword id="KW-0934">Plastid</keyword>
<keyword id="KW-0793">Thylakoid</keyword>
<keyword id="KW-0812">Transmembrane</keyword>
<keyword id="KW-1133">Transmembrane helix</keyword>
<protein>
    <recommendedName>
        <fullName evidence="1">Photosystem I assembly protein Ycf4</fullName>
    </recommendedName>
</protein>
<accession>Q8M9X4</accession>
<comment type="function">
    <text evidence="1">Seems to be required for the assembly of the photosystem I complex.</text>
</comment>
<comment type="subcellular location">
    <subcellularLocation>
        <location evidence="1">Plastid</location>
        <location evidence="1">Chloroplast thylakoid membrane</location>
        <topology evidence="1">Multi-pass membrane protein</topology>
    </subcellularLocation>
</comment>
<comment type="similarity">
    <text evidence="1">Belongs to the Ycf4 family.</text>
</comment>
<dbReference type="EMBL" id="AF494278">
    <property type="protein sequence ID" value="AAM96584.1"/>
    <property type="molecule type" value="Genomic_DNA"/>
</dbReference>
<dbReference type="RefSeq" id="NP_683814.1">
    <property type="nucleotide sequence ID" value="NC_004115.1"/>
</dbReference>
<dbReference type="GeneID" id="860740"/>
<dbReference type="GO" id="GO:0009535">
    <property type="term" value="C:chloroplast thylakoid membrane"/>
    <property type="evidence" value="ECO:0007669"/>
    <property type="project" value="UniProtKB-SubCell"/>
</dbReference>
<dbReference type="GO" id="GO:0009522">
    <property type="term" value="C:photosystem I"/>
    <property type="evidence" value="ECO:0007669"/>
    <property type="project" value="InterPro"/>
</dbReference>
<dbReference type="GO" id="GO:0015979">
    <property type="term" value="P:photosynthesis"/>
    <property type="evidence" value="ECO:0007669"/>
    <property type="project" value="UniProtKB-UniRule"/>
</dbReference>
<dbReference type="HAMAP" id="MF_00437">
    <property type="entry name" value="Ycf4"/>
    <property type="match status" value="1"/>
</dbReference>
<dbReference type="InterPro" id="IPR003359">
    <property type="entry name" value="PSI_Ycf4_assembly"/>
</dbReference>
<dbReference type="NCBIfam" id="NF002712">
    <property type="entry name" value="PRK02542.1"/>
    <property type="match status" value="1"/>
</dbReference>
<dbReference type="PANTHER" id="PTHR33288">
    <property type="match status" value="1"/>
</dbReference>
<dbReference type="PANTHER" id="PTHR33288:SF4">
    <property type="entry name" value="PHOTOSYSTEM I ASSEMBLY PROTEIN YCF4"/>
    <property type="match status" value="1"/>
</dbReference>
<dbReference type="Pfam" id="PF02392">
    <property type="entry name" value="Ycf4"/>
    <property type="match status" value="1"/>
</dbReference>
<organism>
    <name type="scientific">Chaetosphaeridium globosum</name>
    <name type="common">Charophycean green alga</name>
    <name type="synonym">Herposteiron globosum</name>
    <dbReference type="NCBI Taxonomy" id="96477"/>
    <lineage>
        <taxon>Eukaryota</taxon>
        <taxon>Viridiplantae</taxon>
        <taxon>Streptophyta</taxon>
        <taxon>Coleochaetophyceae</taxon>
        <taxon>Coleochaetales</taxon>
        <taxon>Chaetosphaeridiaceae</taxon>
        <taxon>Chaetosphaeridium</taxon>
    </lineage>
</organism>
<geneLocation type="chloroplast"/>
<gene>
    <name evidence="1" type="primary">ycf4</name>
</gene>
<name>YCF4_CHAGL</name>
<sequence>MNIKSEFFRVDFIIGARRLSNYFWATVVFLGSLGFFIVGVSSYLQKNIVFFLSASDILFTPQGIVMCFYGIAGLFLSFYLWFTIFLDIGSGYNEFDKKKGIISIFRWGYPGQNRRIKLSFPIKDVQAIKLEVKEVLPARRMIYIKIKGQQDIPLNRIAENITLREMEDKAADLARFLKVSIEGL</sequence>
<proteinExistence type="inferred from homology"/>
<evidence type="ECO:0000255" key="1">
    <source>
        <dbReference type="HAMAP-Rule" id="MF_00437"/>
    </source>
</evidence>